<evidence type="ECO:0000250" key="1"/>
<evidence type="ECO:0000256" key="2">
    <source>
        <dbReference type="SAM" id="MobiDB-lite"/>
    </source>
</evidence>
<evidence type="ECO:0000305" key="3"/>
<proteinExistence type="inferred from homology"/>
<feature type="initiator methionine" description="Removed" evidence="1">
    <location>
        <position position="1"/>
    </location>
</feature>
<feature type="chain" id="PRO_0000078482" description="Chaperone protein DnaK">
    <location>
        <begin position="2"/>
        <end position="613"/>
    </location>
</feature>
<feature type="region of interest" description="Disordered" evidence="2">
    <location>
        <begin position="578"/>
        <end position="613"/>
    </location>
</feature>
<feature type="compositionally biased region" description="Low complexity" evidence="2">
    <location>
        <begin position="578"/>
        <end position="591"/>
    </location>
</feature>
<feature type="compositionally biased region" description="Acidic residues" evidence="2">
    <location>
        <begin position="596"/>
        <end position="613"/>
    </location>
</feature>
<feature type="modified residue" description="Phosphothreonine; by autocatalysis" evidence="1">
    <location>
        <position position="173"/>
    </location>
</feature>
<reference key="1">
    <citation type="journal article" date="2001" name="Science">
        <title>Comparative genomics of Listeria species.</title>
        <authorList>
            <person name="Glaser P."/>
            <person name="Frangeul L."/>
            <person name="Buchrieser C."/>
            <person name="Rusniok C."/>
            <person name="Amend A."/>
            <person name="Baquero F."/>
            <person name="Berche P."/>
            <person name="Bloecker H."/>
            <person name="Brandt P."/>
            <person name="Chakraborty T."/>
            <person name="Charbit A."/>
            <person name="Chetouani F."/>
            <person name="Couve E."/>
            <person name="de Daruvar A."/>
            <person name="Dehoux P."/>
            <person name="Domann E."/>
            <person name="Dominguez-Bernal G."/>
            <person name="Duchaud E."/>
            <person name="Durant L."/>
            <person name="Dussurget O."/>
            <person name="Entian K.-D."/>
            <person name="Fsihi H."/>
            <person name="Garcia-del Portillo F."/>
            <person name="Garrido P."/>
            <person name="Gautier L."/>
            <person name="Goebel W."/>
            <person name="Gomez-Lopez N."/>
            <person name="Hain T."/>
            <person name="Hauf J."/>
            <person name="Jackson D."/>
            <person name="Jones L.-M."/>
            <person name="Kaerst U."/>
            <person name="Kreft J."/>
            <person name="Kuhn M."/>
            <person name="Kunst F."/>
            <person name="Kurapkat G."/>
            <person name="Madueno E."/>
            <person name="Maitournam A."/>
            <person name="Mata Vicente J."/>
            <person name="Ng E."/>
            <person name="Nedjari H."/>
            <person name="Nordsiek G."/>
            <person name="Novella S."/>
            <person name="de Pablos B."/>
            <person name="Perez-Diaz J.-C."/>
            <person name="Purcell R."/>
            <person name="Remmel B."/>
            <person name="Rose M."/>
            <person name="Schlueter T."/>
            <person name="Simoes N."/>
            <person name="Tierrez A."/>
            <person name="Vazquez-Boland J.-A."/>
            <person name="Voss H."/>
            <person name="Wehland J."/>
            <person name="Cossart P."/>
        </authorList>
    </citation>
    <scope>NUCLEOTIDE SEQUENCE [LARGE SCALE GENOMIC DNA]</scope>
    <source>
        <strain>ATCC BAA-680 / CLIP 11262</strain>
    </source>
</reference>
<protein>
    <recommendedName>
        <fullName>Chaperone protein DnaK</fullName>
    </recommendedName>
    <alternativeName>
        <fullName>HSP70</fullName>
    </alternativeName>
    <alternativeName>
        <fullName>Heat shock 70 kDa protein</fullName>
    </alternativeName>
    <alternativeName>
        <fullName>Heat shock protein 70</fullName>
    </alternativeName>
</protein>
<organism>
    <name type="scientific">Listeria innocua serovar 6a (strain ATCC BAA-680 / CLIP 11262)</name>
    <dbReference type="NCBI Taxonomy" id="272626"/>
    <lineage>
        <taxon>Bacteria</taxon>
        <taxon>Bacillati</taxon>
        <taxon>Bacillota</taxon>
        <taxon>Bacilli</taxon>
        <taxon>Bacillales</taxon>
        <taxon>Listeriaceae</taxon>
        <taxon>Listeria</taxon>
    </lineage>
</organism>
<name>DNAK_LISIN</name>
<dbReference type="EMBL" id="AL596168">
    <property type="protein sequence ID" value="CAC96741.1"/>
    <property type="molecule type" value="Genomic_DNA"/>
</dbReference>
<dbReference type="PIR" id="AE1621">
    <property type="entry name" value="AE1621"/>
</dbReference>
<dbReference type="RefSeq" id="WP_010991568.1">
    <property type="nucleotide sequence ID" value="NC_003212.1"/>
</dbReference>
<dbReference type="SMR" id="Q92BN8"/>
<dbReference type="STRING" id="272626.gene:17565841"/>
<dbReference type="KEGG" id="lin:dnaK"/>
<dbReference type="eggNOG" id="COG0443">
    <property type="taxonomic scope" value="Bacteria"/>
</dbReference>
<dbReference type="HOGENOM" id="CLU_005965_2_4_9"/>
<dbReference type="OrthoDB" id="9766019at2"/>
<dbReference type="Proteomes" id="UP000002513">
    <property type="component" value="Chromosome"/>
</dbReference>
<dbReference type="GO" id="GO:0005524">
    <property type="term" value="F:ATP binding"/>
    <property type="evidence" value="ECO:0007669"/>
    <property type="project" value="UniProtKB-UniRule"/>
</dbReference>
<dbReference type="GO" id="GO:0140662">
    <property type="term" value="F:ATP-dependent protein folding chaperone"/>
    <property type="evidence" value="ECO:0007669"/>
    <property type="project" value="InterPro"/>
</dbReference>
<dbReference type="GO" id="GO:0051082">
    <property type="term" value="F:unfolded protein binding"/>
    <property type="evidence" value="ECO:0007669"/>
    <property type="project" value="InterPro"/>
</dbReference>
<dbReference type="CDD" id="cd10234">
    <property type="entry name" value="ASKHA_NBD_HSP70_DnaK-like"/>
    <property type="match status" value="1"/>
</dbReference>
<dbReference type="FunFam" id="2.60.34.10:FF:000014">
    <property type="entry name" value="Chaperone protein DnaK HSP70"/>
    <property type="match status" value="1"/>
</dbReference>
<dbReference type="FunFam" id="1.20.1270.10:FF:000001">
    <property type="entry name" value="Molecular chaperone DnaK"/>
    <property type="match status" value="1"/>
</dbReference>
<dbReference type="FunFam" id="3.30.420.40:FF:000071">
    <property type="entry name" value="Molecular chaperone DnaK"/>
    <property type="match status" value="1"/>
</dbReference>
<dbReference type="FunFam" id="3.90.640.10:FF:000003">
    <property type="entry name" value="Molecular chaperone DnaK"/>
    <property type="match status" value="1"/>
</dbReference>
<dbReference type="Gene3D" id="1.20.1270.10">
    <property type="match status" value="1"/>
</dbReference>
<dbReference type="Gene3D" id="3.30.420.40">
    <property type="match status" value="2"/>
</dbReference>
<dbReference type="Gene3D" id="3.90.640.10">
    <property type="entry name" value="Actin, Chain A, domain 4"/>
    <property type="match status" value="1"/>
</dbReference>
<dbReference type="Gene3D" id="2.60.34.10">
    <property type="entry name" value="Substrate Binding Domain Of DNAk, Chain A, domain 1"/>
    <property type="match status" value="1"/>
</dbReference>
<dbReference type="HAMAP" id="MF_00332">
    <property type="entry name" value="DnaK"/>
    <property type="match status" value="1"/>
</dbReference>
<dbReference type="InterPro" id="IPR043129">
    <property type="entry name" value="ATPase_NBD"/>
</dbReference>
<dbReference type="InterPro" id="IPR012725">
    <property type="entry name" value="Chaperone_DnaK"/>
</dbReference>
<dbReference type="InterPro" id="IPR018181">
    <property type="entry name" value="Heat_shock_70_CS"/>
</dbReference>
<dbReference type="InterPro" id="IPR029048">
    <property type="entry name" value="HSP70_C_sf"/>
</dbReference>
<dbReference type="InterPro" id="IPR029047">
    <property type="entry name" value="HSP70_peptide-bd_sf"/>
</dbReference>
<dbReference type="InterPro" id="IPR013126">
    <property type="entry name" value="Hsp_70_fam"/>
</dbReference>
<dbReference type="NCBIfam" id="NF001413">
    <property type="entry name" value="PRK00290.1"/>
    <property type="match status" value="1"/>
</dbReference>
<dbReference type="NCBIfam" id="TIGR02350">
    <property type="entry name" value="prok_dnaK"/>
    <property type="match status" value="1"/>
</dbReference>
<dbReference type="PANTHER" id="PTHR19375">
    <property type="entry name" value="HEAT SHOCK PROTEIN 70KDA"/>
    <property type="match status" value="1"/>
</dbReference>
<dbReference type="Pfam" id="PF00012">
    <property type="entry name" value="HSP70"/>
    <property type="match status" value="1"/>
</dbReference>
<dbReference type="PRINTS" id="PR00301">
    <property type="entry name" value="HEATSHOCK70"/>
</dbReference>
<dbReference type="SUPFAM" id="SSF53067">
    <property type="entry name" value="Actin-like ATPase domain"/>
    <property type="match status" value="2"/>
</dbReference>
<dbReference type="SUPFAM" id="SSF100934">
    <property type="entry name" value="Heat shock protein 70kD (HSP70), C-terminal subdomain"/>
    <property type="match status" value="1"/>
</dbReference>
<dbReference type="SUPFAM" id="SSF100920">
    <property type="entry name" value="Heat shock protein 70kD (HSP70), peptide-binding domain"/>
    <property type="match status" value="1"/>
</dbReference>
<dbReference type="PROSITE" id="PS00297">
    <property type="entry name" value="HSP70_1"/>
    <property type="match status" value="1"/>
</dbReference>
<dbReference type="PROSITE" id="PS00329">
    <property type="entry name" value="HSP70_2"/>
    <property type="match status" value="1"/>
</dbReference>
<dbReference type="PROSITE" id="PS01036">
    <property type="entry name" value="HSP70_3"/>
    <property type="match status" value="1"/>
</dbReference>
<comment type="function">
    <text evidence="1">Acts as a chaperone.</text>
</comment>
<comment type="induction">
    <text evidence="1">By stress conditions e.g. heat shock (By similarity).</text>
</comment>
<comment type="similarity">
    <text evidence="3">Belongs to the heat shock protein 70 family.</text>
</comment>
<keyword id="KW-0067">ATP-binding</keyword>
<keyword id="KW-0143">Chaperone</keyword>
<keyword id="KW-0547">Nucleotide-binding</keyword>
<keyword id="KW-0597">Phosphoprotein</keyword>
<keyword id="KW-0346">Stress response</keyword>
<sequence length="613" mass="66129">MSKIIGIDLGTTNSAVAVLEGGEAKIIPNPEGARTTPSVVGFKNGERQVGEVAKRAAITNPNTISSIKRHMGTNYKETIEGKDYSPQEISAIILQYLKSYAEDYLGETVDKAVITVPAYFNDAQRQATKDAGKIAGLEVERIINEPTAAALAYGMDKTETDQTILVFDLGGGTFDVSILELGDGVFEVHSTAGDNELGGDDFDKKIIDYLVAEFKKDNGIDLSQDKMALQRLKDAAEKAKKDLSGVTSTQISLPFITAGEAGPLHLEVTLTRAKFDELTHDLVERTIAPTRQALKDANLSASDIDQVILVGGSTRIPAVQETIKKELGKEPHKGVNPDEVVAMGAAIQGGVITGDVKDVVLLDVTPLSLGIETMGGVMTTLIERNTTIPTSKSQTFSTAADNQPAVDIHVLQGERPMAKDNKTLGRFQLADIPPAPRGIPQIEVSFDIDKNGIVTVRAKDLGTGKEQNIVIKSSSGLTDEEIEKMVQDAEANAEEDKKNKENAELRNNADQLVFTVDKTLKELEGKVEEEEVKKAEAARDELQEALKGENFDAIKEKTDSLNEIVQNLSVKLYEQAAAEQQAAGGAEGQEAPQNDDVVDAEFEEVNDDDKENK</sequence>
<gene>
    <name type="primary">dnaK</name>
    <name type="ordered locus">lin1510</name>
</gene>
<accession>Q92BN8</accession>